<protein>
    <recommendedName>
        <fullName evidence="11">Sphingolipid delta(4)-desaturase DES1</fullName>
        <ecNumber evidence="3 8">1.14.19.17</ecNumber>
    </recommendedName>
    <alternativeName>
        <fullName>Cell migration-inducing gene 15 protein</fullName>
    </alternativeName>
    <alternativeName>
        <fullName>Degenerative spermatocyte homolog 1</fullName>
    </alternativeName>
    <alternativeName>
        <fullName>Dihydroceramide desaturase-1</fullName>
    </alternativeName>
    <alternativeName>
        <fullName>Membrane lipid desaturase</fullName>
    </alternativeName>
    <alternativeName>
        <fullName>Retinol isomerase</fullName>
        <ecNumber evidence="5">5.2.1.-</ecNumber>
    </alternativeName>
</protein>
<comment type="function">
    <text evidence="1 3 7 8">Has sphingolipid-delta-4-desaturase activity. Converts D-erythro-sphinganine to D-erythro-sphingosine (E-sphing-4-enine) (PubMed:11937514, PubMed:30620337, PubMed:30620338). Catalyzes the equilibrium isomerization of retinols (By similarity).</text>
</comment>
<comment type="catalytic activity">
    <reaction evidence="3 8">
        <text>an N-acylsphinganine + 2 Fe(II)-[cytochrome b5] + O2 + 2 H(+) = an N-acylsphing-4-enine + 2 Fe(III)-[cytochrome b5] + 2 H2O</text>
        <dbReference type="Rhea" id="RHEA:46544"/>
        <dbReference type="Rhea" id="RHEA-COMP:10438"/>
        <dbReference type="Rhea" id="RHEA-COMP:10439"/>
        <dbReference type="ChEBI" id="CHEBI:15377"/>
        <dbReference type="ChEBI" id="CHEBI:15378"/>
        <dbReference type="ChEBI" id="CHEBI:15379"/>
        <dbReference type="ChEBI" id="CHEBI:29033"/>
        <dbReference type="ChEBI" id="CHEBI:29034"/>
        <dbReference type="ChEBI" id="CHEBI:31488"/>
        <dbReference type="ChEBI" id="CHEBI:52639"/>
        <dbReference type="EC" id="1.14.19.17"/>
    </reaction>
    <physiologicalReaction direction="left-to-right" evidence="12">
        <dbReference type="Rhea" id="RHEA:46545"/>
    </physiologicalReaction>
</comment>
<comment type="catalytic activity">
    <reaction evidence="5">
        <text>all-trans-retinol = 11-cis-retinol</text>
        <dbReference type="Rhea" id="RHEA:19141"/>
        <dbReference type="ChEBI" id="CHEBI:16302"/>
        <dbReference type="ChEBI" id="CHEBI:17336"/>
    </reaction>
    <physiologicalReaction direction="left-to-right" evidence="13">
        <dbReference type="Rhea" id="RHEA:19142"/>
    </physiologicalReaction>
    <physiologicalReaction direction="right-to-left" evidence="1">
        <dbReference type="Rhea" id="RHEA:19143"/>
    </physiologicalReaction>
</comment>
<comment type="catalytic activity">
    <reaction evidence="1">
        <text>all-trans-retinol = 9-cis-retinol</text>
        <dbReference type="Rhea" id="RHEA:55348"/>
        <dbReference type="ChEBI" id="CHEBI:17336"/>
        <dbReference type="ChEBI" id="CHEBI:78272"/>
    </reaction>
    <physiologicalReaction direction="left-to-right" evidence="1">
        <dbReference type="Rhea" id="RHEA:55349"/>
    </physiologicalReaction>
</comment>
<comment type="catalytic activity">
    <reaction evidence="1">
        <text>all-trans-retinol = 13-cis-retinol</text>
        <dbReference type="Rhea" id="RHEA:55352"/>
        <dbReference type="ChEBI" id="CHEBI:17336"/>
        <dbReference type="ChEBI" id="CHEBI:45479"/>
    </reaction>
    <physiologicalReaction direction="left-to-right" evidence="1">
        <dbReference type="Rhea" id="RHEA:55353"/>
    </physiologicalReaction>
</comment>
<comment type="catalytic activity">
    <reaction evidence="1">
        <text>11-cis-retinol = 13-cis-retinol</text>
        <dbReference type="Rhea" id="RHEA:55356"/>
        <dbReference type="ChEBI" id="CHEBI:16302"/>
        <dbReference type="ChEBI" id="CHEBI:45479"/>
    </reaction>
    <physiologicalReaction direction="left-to-right" evidence="1">
        <dbReference type="Rhea" id="RHEA:55357"/>
    </physiologicalReaction>
</comment>
<comment type="catalytic activity">
    <reaction evidence="1">
        <text>11-cis-retinol = 9-cis-retinol</text>
        <dbReference type="Rhea" id="RHEA:55360"/>
        <dbReference type="ChEBI" id="CHEBI:16302"/>
        <dbReference type="ChEBI" id="CHEBI:78272"/>
    </reaction>
    <physiologicalReaction direction="left-to-right" evidence="1">
        <dbReference type="Rhea" id="RHEA:55361"/>
    </physiologicalReaction>
</comment>
<comment type="subunit">
    <text evidence="1">Interacts with RLBP1; the interaction increases synthesis of chromophore-precursors by DEGS1.</text>
</comment>
<comment type="interaction">
    <interactant intactId="EBI-1052713">
        <id>O15121</id>
    </interactant>
    <interactant intactId="EBI-12003442">
        <id>Q8WVX3-2</id>
        <label>C4orf3</label>
    </interactant>
    <organismsDiffer>false</organismsDiffer>
    <experiments>3</experiments>
</comment>
<comment type="interaction">
    <interactant intactId="EBI-1052713">
        <id>O15121</id>
    </interactant>
    <interactant intactId="EBI-12913124">
        <id>Q9NTN9-2</id>
        <label>SEMA4G</label>
    </interactant>
    <organismsDiffer>false</organismsDiffer>
    <experiments>3</experiments>
</comment>
<comment type="subcellular location">
    <subcellularLocation>
        <location evidence="4 8">Mitochondrion membrane</location>
    </subcellularLocation>
    <subcellularLocation>
        <location evidence="4 8 10">Endoplasmic reticulum membrane</location>
        <topology evidence="4 10">Multi-pass membrane protein</topology>
    </subcellularLocation>
</comment>
<comment type="tissue specificity">
    <text evidence="10">Ubiquitous.</text>
</comment>
<comment type="PTM">
    <text evidence="4">Myristoylation can target the enzyme to the mitochondria leading to an increase in ceramide levels.</text>
</comment>
<comment type="disease" evidence="7 8 9">
    <disease id="DI-05549">
        <name>Leukodystrophy, hypomyelinating, 18</name>
        <acronym>HLD18</acronym>
        <description>An autosomal recessive disorder characterized by hypomyelinating leukodystrophy with progressive atrophy of the corpus callosum, thalami and cerebellum, and peripheral neuropathy. Clinical features include very poor psychomotor development, dystonia, severe spasticity, seizures, and failure to thrive.</description>
        <dbReference type="MIM" id="618404"/>
    </disease>
    <text>The disease is caused by variants affecting the gene represented in this entry.</text>
</comment>
<comment type="similarity">
    <text evidence="11">Belongs to the fatty acid desaturase type 1 family. DEGS subfamily.</text>
</comment>
<proteinExistence type="evidence at protein level"/>
<feature type="initiator methionine" description="Removed" evidence="6">
    <location>
        <position position="1"/>
    </location>
</feature>
<feature type="chain" id="PRO_0000312727" description="Sphingolipid delta(4)-desaturase DES1">
    <location>
        <begin position="2"/>
        <end position="323"/>
    </location>
</feature>
<feature type="transmembrane region" description="Helical" evidence="2">
    <location>
        <begin position="41"/>
        <end position="61"/>
    </location>
</feature>
<feature type="transmembrane region" description="Helical" evidence="2">
    <location>
        <begin position="68"/>
        <end position="88"/>
    </location>
</feature>
<feature type="transmembrane region" description="Helical" evidence="2">
    <location>
        <begin position="102"/>
        <end position="122"/>
    </location>
</feature>
<feature type="transmembrane region" description="Helical" evidence="2">
    <location>
        <begin position="152"/>
        <end position="172"/>
    </location>
</feature>
<feature type="transmembrane region" description="Helical" evidence="2">
    <location>
        <begin position="184"/>
        <end position="204"/>
    </location>
</feature>
<feature type="transmembrane region" description="Helical" evidence="2">
    <location>
        <begin position="209"/>
        <end position="229"/>
    </location>
</feature>
<feature type="short sequence motif" description="Histidine box-1" evidence="11">
    <location>
        <begin position="89"/>
        <end position="93"/>
    </location>
</feature>
<feature type="short sequence motif" description="Histidine box-2" evidence="11">
    <location>
        <begin position="128"/>
        <end position="132"/>
    </location>
</feature>
<feature type="short sequence motif" description="Histidine box-3" evidence="11">
    <location>
        <begin position="259"/>
        <end position="263"/>
    </location>
</feature>
<feature type="modified residue" description="Phosphoserine" evidence="15">
    <location>
        <position position="307"/>
    </location>
</feature>
<feature type="lipid moiety-binding region" description="N-myristoyl glycine" evidence="4 6">
    <location>
        <position position="2"/>
    </location>
</feature>
<feature type="sequence variant" id="VAR_082594" description="In HLD18; uncertain significance; dbSNP:rs1388884067." evidence="7">
    <original>M</original>
    <variation>T</variation>
    <location>
        <position position="37"/>
    </location>
</feature>
<feature type="sequence variant" id="VAR_082595" description="In HLD18." evidence="7">
    <location>
        <begin position="107"/>
        <end position="323"/>
    </location>
</feature>
<feature type="sequence variant" id="VAR_082596" description="In HLD18; decreased function in sphingolipid biosynthetic process; dbSNP:rs1280845604." evidence="7">
    <original>N</original>
    <variation>D</variation>
    <location>
        <position position="113"/>
    </location>
</feature>
<feature type="sequence variant" id="VAR_082597" description="In HLD18; uncertain significance; dbSNP:rs1558209997." evidence="7">
    <original>H</original>
    <variation>R</variation>
    <location>
        <position position="132"/>
    </location>
</feature>
<feature type="sequence variant" id="VAR_082598" description="In HLD18; dbSNP:rs1367958450." evidence="7">
    <original>R</original>
    <variation>W</variation>
    <location>
        <position position="133"/>
    </location>
</feature>
<feature type="sequence variant" id="VAR_082599" description="In HLD18." evidence="7">
    <location>
        <begin position="173"/>
        <end position="323"/>
    </location>
</feature>
<feature type="sequence variant" id="VAR_082600" description="In HLD18; uncertain significance; dbSNP:rs771864122." evidence="7">
    <original>N</original>
    <variation>D</variation>
    <location>
        <position position="189"/>
    </location>
</feature>
<feature type="sequence variant" id="VAR_082601" description="In HLD18; decreased function in sphingolipid biosynthetic process; dbSNP:rs768180196." evidence="7 9">
    <original>N</original>
    <variation>S</variation>
    <location>
        <position position="255"/>
    </location>
</feature>
<feature type="sequence variant" id="VAR_082602" description="In HLD18; decreased function in sphingolipid biosynthetic process; reduced protein levels; increased protein degradation; dbSNP:rs1558211070." evidence="8">
    <original>A</original>
    <variation>V</variation>
    <location>
        <position position="280"/>
    </location>
</feature>
<feature type="sequence variant" id="VAR_082603" description="In HLD18; uncertain significance." evidence="7">
    <location>
        <begin position="293"/>
        <end position="323"/>
    </location>
</feature>
<reference key="1">
    <citation type="journal article" date="1997" name="Biochemistry">
        <title>The product of the MLD gene is a member of the membrane fatty acid desaturase family: overexpression of MLD inhibits EGF receptor biosynthesis.</title>
        <authorList>
            <person name="Cadena D.L."/>
            <person name="Kurten R.C."/>
            <person name="Gill G.N."/>
        </authorList>
    </citation>
    <scope>NUCLEOTIDE SEQUENCE [MRNA]</scope>
    <scope>SUBCELLULAR LOCATION</scope>
    <scope>TISSUE SPECIFICITY</scope>
    <source>
        <tissue>Cervix carcinoma</tissue>
    </source>
</reference>
<reference key="2">
    <citation type="journal article" date="2002" name="J. Biol. Chem.">
        <title>Identification and characterization of a sphingolipid delta 4-desaturase family.</title>
        <authorList>
            <person name="Ternes P."/>
            <person name="Franke S."/>
            <person name="Zaehringer U."/>
            <person name="Sperling P."/>
            <person name="Heinz E."/>
        </authorList>
    </citation>
    <scope>NUCLEOTIDE SEQUENCE [MRNA]</scope>
    <scope>FUNCTION</scope>
    <scope>CATALYTIC ACTIVITY</scope>
    <source>
        <tissue>Lung</tissue>
    </source>
</reference>
<reference key="3">
    <citation type="submission" date="2003-09" db="EMBL/GenBank/DDBJ databases">
        <title>Identification of a human migration-inducing gene.</title>
        <authorList>
            <person name="Kim J.W."/>
        </authorList>
    </citation>
    <scope>NUCLEOTIDE SEQUENCE [LARGE SCALE MRNA]</scope>
</reference>
<reference key="4">
    <citation type="submission" date="2005-07" db="EMBL/GenBank/DDBJ databases">
        <authorList>
            <person name="Mural R.J."/>
            <person name="Istrail S."/>
            <person name="Sutton G.G."/>
            <person name="Florea L."/>
            <person name="Halpern A.L."/>
            <person name="Mobarry C.M."/>
            <person name="Lippert R."/>
            <person name="Walenz B."/>
            <person name="Shatkay H."/>
            <person name="Dew I."/>
            <person name="Miller J.R."/>
            <person name="Flanigan M.J."/>
            <person name="Edwards N.J."/>
            <person name="Bolanos R."/>
            <person name="Fasulo D."/>
            <person name="Halldorsson B.V."/>
            <person name="Hannenhalli S."/>
            <person name="Turner R."/>
            <person name="Yooseph S."/>
            <person name="Lu F."/>
            <person name="Nusskern D.R."/>
            <person name="Shue B.C."/>
            <person name="Zheng X.H."/>
            <person name="Zhong F."/>
            <person name="Delcher A.L."/>
            <person name="Huson D.H."/>
            <person name="Kravitz S.A."/>
            <person name="Mouchard L."/>
            <person name="Reinert K."/>
            <person name="Remington K.A."/>
            <person name="Clark A.G."/>
            <person name="Waterman M.S."/>
            <person name="Eichler E.E."/>
            <person name="Adams M.D."/>
            <person name="Hunkapiller M.W."/>
            <person name="Myers E.W."/>
            <person name="Venter J.C."/>
        </authorList>
    </citation>
    <scope>NUCLEOTIDE SEQUENCE [LARGE SCALE GENOMIC DNA]</scope>
</reference>
<reference key="5">
    <citation type="journal article" date="2004" name="Genome Res.">
        <title>The status, quality, and expansion of the NIH full-length cDNA project: the Mammalian Gene Collection (MGC).</title>
        <authorList>
            <consortium name="The MGC Project Team"/>
        </authorList>
    </citation>
    <scope>NUCLEOTIDE SEQUENCE [LARGE SCALE MRNA]</scope>
    <source>
        <tissue>Placenta</tissue>
    </source>
</reference>
<reference key="6">
    <citation type="journal article" date="2008" name="Proc. Natl. Acad. Sci. U.S.A.">
        <title>A quantitative atlas of mitotic phosphorylation.</title>
        <authorList>
            <person name="Dephoure N."/>
            <person name="Zhou C."/>
            <person name="Villen J."/>
            <person name="Beausoleil S.A."/>
            <person name="Bakalarski C.E."/>
            <person name="Elledge S.J."/>
            <person name="Gygi S.P."/>
        </authorList>
    </citation>
    <scope>PHOSPHORYLATION [LARGE SCALE ANALYSIS] AT SER-307</scope>
    <scope>IDENTIFICATION BY MASS SPECTROMETRY [LARGE SCALE ANALYSIS]</scope>
    <source>
        <tissue>Cervix carcinoma</tissue>
    </source>
</reference>
<reference key="7">
    <citation type="journal article" date="2009" name="Biochimie">
        <title>N-Myristoylation targets dihydroceramide Delta4-desaturase 1 to mitochondria: partial involvement in the apoptotic effect of myristic acid.</title>
        <authorList>
            <person name="Beauchamp E."/>
            <person name="Tekpli X."/>
            <person name="Marteil G."/>
            <person name="Lagadic-Gossmann D."/>
            <person name="Legrand P."/>
            <person name="Rioux V."/>
        </authorList>
    </citation>
    <scope>SUBCELLULAR LOCATION</scope>
    <scope>MYRISTOYLATION AT GLY-2</scope>
</reference>
<reference key="8">
    <citation type="journal article" date="2011" name="BMC Syst. Biol.">
        <title>Initial characterization of the human central proteome.</title>
        <authorList>
            <person name="Burkard T.R."/>
            <person name="Planyavsky M."/>
            <person name="Kaupe I."/>
            <person name="Breitwieser F.P."/>
            <person name="Buerckstuemmer T."/>
            <person name="Bennett K.L."/>
            <person name="Superti-Furga G."/>
            <person name="Colinge J."/>
        </authorList>
    </citation>
    <scope>IDENTIFICATION BY MASS SPECTROMETRY [LARGE SCALE ANALYSIS]</scope>
</reference>
<reference key="9">
    <citation type="journal article" date="2013" name="Nat. Chem. Biol.">
        <title>Identification of DES1 as a vitamin A isomerase in Mueller glial cells of the retina.</title>
        <authorList>
            <person name="Kaylor J.J."/>
            <person name="Yuan Q."/>
            <person name="Cook J."/>
            <person name="Sarfare S."/>
            <person name="Makshanoff J."/>
            <person name="Miu A."/>
            <person name="Kim A."/>
            <person name="Kim P."/>
            <person name="Habib S."/>
            <person name="Roybal C.N."/>
            <person name="Xu T."/>
            <person name="Nusinowitz S."/>
            <person name="Travis G.H."/>
        </authorList>
    </citation>
    <scope>CATALYTIC ACTIVITY</scope>
</reference>
<reference key="10">
    <citation type="journal article" date="2014" name="Nat. Commun.">
        <title>Global profiling of co- and post-translationally N-myristoylated proteomes in human cells.</title>
        <authorList>
            <person name="Thinon E."/>
            <person name="Serwa R.A."/>
            <person name="Broncel M."/>
            <person name="Brannigan J.A."/>
            <person name="Brassat U."/>
            <person name="Wright M.H."/>
            <person name="Heal W.P."/>
            <person name="Wilkinson A.J."/>
            <person name="Mann D.J."/>
            <person name="Tate E.W."/>
        </authorList>
    </citation>
    <scope>MYRISTOYLATION AT GLY-2</scope>
    <scope>CLEAVAGE OF INITIATOR METHIONINE</scope>
    <scope>IDENTIFICATION BY MASS SPECTROMETRY</scope>
</reference>
<reference key="11">
    <citation type="journal article" date="2019" name="J. Clin. Invest.">
        <title>DEGS1-associated aberrant sphingolipid metabolism impairs nervous system function in humans.</title>
        <authorList>
            <person name="Karsai G."/>
            <person name="Kraft F."/>
            <person name="Haag N."/>
            <person name="Korenke G.C."/>
            <person name="Haenisch B."/>
            <person name="Othman A."/>
            <person name="Suriyanarayanan S."/>
            <person name="Steiner R."/>
            <person name="Knopp C."/>
            <person name="Mull M."/>
            <person name="Bergmann M."/>
            <person name="Schroeder J.M."/>
            <person name="Weis J."/>
            <person name="Elbracht M."/>
            <person name="Begemann M."/>
            <person name="Hornemann T."/>
            <person name="Kurth I."/>
        </authorList>
    </citation>
    <scope>FUNCTION</scope>
    <scope>CATALYTIC ACTIVITY</scope>
    <scope>SUBCELLULAR LOCATION</scope>
    <scope>INVOLVEMENT IN HLD18</scope>
    <scope>VARIANT HLD18 VAL-280</scope>
    <scope>CHARACTERIZATION OF VARIANT HLD18 VAL-280</scope>
</reference>
<reference key="12">
    <citation type="journal article" date="2019" name="J. Clin. Invest.">
        <title>Loss of the sphingolipid desaturase DEGS1 causes hypomyelinating leukodystrophy.</title>
        <authorList>
            <person name="Pant D.C."/>
            <person name="Dorboz I."/>
            <person name="Schluter A."/>
            <person name="Fourcade S."/>
            <person name="Launay N."/>
            <person name="Joya J."/>
            <person name="Aguilera-Albesa S."/>
            <person name="Yoldi M.E."/>
            <person name="Casasnovas C."/>
            <person name="Willis M.J."/>
            <person name="Ruiz M."/>
            <person name="Ville D."/>
            <person name="Lesca G."/>
            <person name="Siquier-Pernet K."/>
            <person name="Desguerre I."/>
            <person name="Yan H."/>
            <person name="Wang J."/>
            <person name="Burmeister M."/>
            <person name="Brady L."/>
            <person name="Tarnopolsky M."/>
            <person name="Cornet C."/>
            <person name="Rubbini D."/>
            <person name="Terriente J."/>
            <person name="James K.N."/>
            <person name="Musaev D."/>
            <person name="Zaki M.S."/>
            <person name="Patterson M.C."/>
            <person name="Lanpher B.C."/>
            <person name="Klee E.W."/>
            <person name="Pinto e Vairo F."/>
            <person name="Wohler E."/>
            <person name="Sobreira N.L.M."/>
            <person name="Cohen J.S."/>
            <person name="Maroofian R."/>
            <person name="Galehdari H."/>
            <person name="Mazaheri N."/>
            <person name="Shariati G."/>
            <person name="Colleaux L."/>
            <person name="Rodriguez D."/>
            <person name="Gleeson J.G."/>
            <person name="Pujades C."/>
            <person name="Fatemi A."/>
            <person name="Boespflug-Tanguy O."/>
            <person name="Pujol A."/>
        </authorList>
    </citation>
    <scope>FUNCTION</scope>
    <scope>INVOLVEMENT IN HLD18</scope>
    <scope>VARIANTS HLD18 THR-37; 107-TRP--GLU-323 DEL; ASP-113; ARG-132; TRP-133; 173-ARG--GLU-323 DEL; ASP-189; SER-255; 284-TYR--GLU-323 DEL; 293-TRP--GLU-323 DEL AND GLU-323 DEL</scope>
    <scope>CHARACTERIZATION OF VARIANTS HLD18 ASP-113 AND SER-255</scope>
</reference>
<reference key="13">
    <citation type="journal article" date="2019" name="Eur. J. Hum. Genet.">
        <title>DEGS1 variant causes neurological disorder.</title>
        <authorList>
            <person name="Dolgin V."/>
            <person name="Straussberg R."/>
            <person name="Xu R."/>
            <person name="Mileva I."/>
            <person name="Yogev Y."/>
            <person name="Khoury R."/>
            <person name="Konen O."/>
            <person name="Barhum Y."/>
            <person name="Zvulunov A."/>
            <person name="Mao C."/>
            <person name="Birk O.S."/>
        </authorList>
    </citation>
    <scope>VARIANT HLD18 SER-255</scope>
    <scope>INVOLVEMENT IN HLD18</scope>
</reference>
<name>DEGS1_HUMAN</name>
<sequence>MGSRVSREDFEWVYTDQPHADRRREILAKYPEIKSLMKPDPNLIWIIIMMVLTQLGAFYIVKDLDWKWVIFGAYAFGSCINHSMTLAIHEIAHNAAFGNCKAMWNRWFGMFANLPIGIPYSISFKRYHMDHHRYLGADGVDVDIPTDFEGWFFCTAFRKFIWVILQPLFYAFRPLFINPKPITYLEVINTVAQVTFDILIYYFLGIKSLVYMLAASLLGLGLHPISGHFIAEHYMFLKGHETYSYYGPLNLLTFNVGYHNEHHDFPNIPGKSLPLVRKIAAEYYDNLPHYNSWIKVLYDFVMDDTISPYSRMKRHQKGEMVLE</sequence>
<keyword id="KW-0225">Disease variant</keyword>
<keyword id="KW-0256">Endoplasmic reticulum</keyword>
<keyword id="KW-0275">Fatty acid biosynthesis</keyword>
<keyword id="KW-0276">Fatty acid metabolism</keyword>
<keyword id="KW-0413">Isomerase</keyword>
<keyword id="KW-1026">Leukodystrophy</keyword>
<keyword id="KW-0444">Lipid biosynthesis</keyword>
<keyword id="KW-0443">Lipid metabolism</keyword>
<keyword id="KW-0449">Lipoprotein</keyword>
<keyword id="KW-0472">Membrane</keyword>
<keyword id="KW-0496">Mitochondrion</keyword>
<keyword id="KW-0519">Myristate</keyword>
<keyword id="KW-0560">Oxidoreductase</keyword>
<keyword id="KW-0597">Phosphoprotein</keyword>
<keyword id="KW-1267">Proteomics identification</keyword>
<keyword id="KW-1185">Reference proteome</keyword>
<keyword id="KW-0812">Transmembrane</keyword>
<keyword id="KW-1133">Transmembrane helix</keyword>
<organism>
    <name type="scientific">Homo sapiens</name>
    <name type="common">Human</name>
    <dbReference type="NCBI Taxonomy" id="9606"/>
    <lineage>
        <taxon>Eukaryota</taxon>
        <taxon>Metazoa</taxon>
        <taxon>Chordata</taxon>
        <taxon>Craniata</taxon>
        <taxon>Vertebrata</taxon>
        <taxon>Euteleostomi</taxon>
        <taxon>Mammalia</taxon>
        <taxon>Eutheria</taxon>
        <taxon>Euarchontoglires</taxon>
        <taxon>Primates</taxon>
        <taxon>Haplorrhini</taxon>
        <taxon>Catarrhini</taxon>
        <taxon>Hominidae</taxon>
        <taxon>Homo</taxon>
    </lineage>
</organism>
<evidence type="ECO:0000250" key="1">
    <source>
        <dbReference type="UniProtKB" id="Q5F3C1"/>
    </source>
</evidence>
<evidence type="ECO:0000255" key="2"/>
<evidence type="ECO:0000269" key="3">
    <source>
    </source>
</evidence>
<evidence type="ECO:0000269" key="4">
    <source>
    </source>
</evidence>
<evidence type="ECO:0000269" key="5">
    <source>
    </source>
</evidence>
<evidence type="ECO:0000269" key="6">
    <source>
    </source>
</evidence>
<evidence type="ECO:0000269" key="7">
    <source>
    </source>
</evidence>
<evidence type="ECO:0000269" key="8">
    <source>
    </source>
</evidence>
<evidence type="ECO:0000269" key="9">
    <source>
    </source>
</evidence>
<evidence type="ECO:0000269" key="10">
    <source>
    </source>
</evidence>
<evidence type="ECO:0000305" key="11"/>
<evidence type="ECO:0000305" key="12">
    <source>
    </source>
</evidence>
<evidence type="ECO:0000305" key="13">
    <source>
    </source>
</evidence>
<evidence type="ECO:0000312" key="14">
    <source>
        <dbReference type="HGNC" id="HGNC:13709"/>
    </source>
</evidence>
<evidence type="ECO:0007744" key="15">
    <source>
    </source>
</evidence>
<accession>O15121</accession>
<gene>
    <name evidence="14" type="primary">DEGS1</name>
    <name type="synonym">DES1</name>
    <name type="synonym">MLD</name>
    <name type="ORF">MIG15</name>
</gene>
<dbReference type="EC" id="1.14.19.17" evidence="3 8"/>
<dbReference type="EC" id="5.2.1.-" evidence="5"/>
<dbReference type="EMBL" id="AF002668">
    <property type="protein sequence ID" value="AAB62238.1"/>
    <property type="molecule type" value="mRNA"/>
</dbReference>
<dbReference type="EMBL" id="AF466375">
    <property type="protein sequence ID" value="AAM12531.1"/>
    <property type="molecule type" value="mRNA"/>
</dbReference>
<dbReference type="EMBL" id="AY423730">
    <property type="protein sequence ID" value="AAS00493.1"/>
    <property type="molecule type" value="mRNA"/>
</dbReference>
<dbReference type="EMBL" id="CH471098">
    <property type="protein sequence ID" value="EAW69711.1"/>
    <property type="molecule type" value="Genomic_DNA"/>
</dbReference>
<dbReference type="EMBL" id="BC000961">
    <property type="protein sequence ID" value="AAH00961.1"/>
    <property type="molecule type" value="mRNA"/>
</dbReference>
<dbReference type="CCDS" id="CCDS1540.1"/>
<dbReference type="RefSeq" id="NP_003667.1">
    <property type="nucleotide sequence ID" value="NM_003676.4"/>
</dbReference>
<dbReference type="BioGRID" id="114130">
    <property type="interactions" value="72"/>
</dbReference>
<dbReference type="FunCoup" id="O15121">
    <property type="interactions" value="1922"/>
</dbReference>
<dbReference type="IntAct" id="O15121">
    <property type="interactions" value="39"/>
</dbReference>
<dbReference type="MINT" id="O15121"/>
<dbReference type="STRING" id="9606.ENSP00000316476"/>
<dbReference type="BindingDB" id="O15121"/>
<dbReference type="ChEMBL" id="CHEMBL2021749"/>
<dbReference type="GuidetoPHARMACOLOGY" id="2484"/>
<dbReference type="SwissLipids" id="SLP:000000166"/>
<dbReference type="GlyGen" id="O15121">
    <property type="glycosylation" value="1 site, 1 O-linked glycan (1 site)"/>
</dbReference>
<dbReference type="iPTMnet" id="O15121"/>
<dbReference type="PhosphoSitePlus" id="O15121"/>
<dbReference type="SwissPalm" id="O15121"/>
<dbReference type="BioMuta" id="DEGS1"/>
<dbReference type="jPOST" id="O15121"/>
<dbReference type="MassIVE" id="O15121"/>
<dbReference type="PaxDb" id="9606-ENSP00000316476"/>
<dbReference type="PeptideAtlas" id="O15121"/>
<dbReference type="ProteomicsDB" id="48459"/>
<dbReference type="Pumba" id="O15121"/>
<dbReference type="Antibodypedia" id="20751">
    <property type="antibodies" value="169 antibodies from 25 providers"/>
</dbReference>
<dbReference type="DNASU" id="8560"/>
<dbReference type="Ensembl" id="ENST00000323699.9">
    <property type="protein sequence ID" value="ENSP00000316476.4"/>
    <property type="gene ID" value="ENSG00000143753.14"/>
</dbReference>
<dbReference type="GeneID" id="8560"/>
<dbReference type="KEGG" id="hsa:8560"/>
<dbReference type="MANE-Select" id="ENST00000323699.9">
    <property type="protein sequence ID" value="ENSP00000316476.4"/>
    <property type="RefSeq nucleotide sequence ID" value="NM_003676.4"/>
    <property type="RefSeq protein sequence ID" value="NP_003667.1"/>
</dbReference>
<dbReference type="UCSC" id="uc001hoj.4">
    <property type="organism name" value="human"/>
</dbReference>
<dbReference type="AGR" id="HGNC:13709"/>
<dbReference type="CTD" id="8560"/>
<dbReference type="DisGeNET" id="8560"/>
<dbReference type="GeneCards" id="DEGS1"/>
<dbReference type="HGNC" id="HGNC:13709">
    <property type="gene designation" value="DEGS1"/>
</dbReference>
<dbReference type="HPA" id="ENSG00000143753">
    <property type="expression patterns" value="Tissue enriched (skin)"/>
</dbReference>
<dbReference type="MalaCards" id="DEGS1"/>
<dbReference type="MIM" id="615843">
    <property type="type" value="gene"/>
</dbReference>
<dbReference type="MIM" id="618404">
    <property type="type" value="phenotype"/>
</dbReference>
<dbReference type="neXtProt" id="NX_O15121"/>
<dbReference type="OpenTargets" id="ENSG00000143753"/>
<dbReference type="PharmGKB" id="PA27250"/>
<dbReference type="VEuPathDB" id="HostDB:ENSG00000143753"/>
<dbReference type="eggNOG" id="KOG2987">
    <property type="taxonomic scope" value="Eukaryota"/>
</dbReference>
<dbReference type="GeneTree" id="ENSGT00390000013448"/>
<dbReference type="InParanoid" id="O15121"/>
<dbReference type="OMA" id="GATCNQN"/>
<dbReference type="OrthoDB" id="200948at2759"/>
<dbReference type="PAN-GO" id="O15121">
    <property type="GO annotations" value="2 GO annotations based on evolutionary models"/>
</dbReference>
<dbReference type="PhylomeDB" id="O15121"/>
<dbReference type="TreeFam" id="TF313582"/>
<dbReference type="BioCyc" id="MetaCyc:ENSG00000143753-MONOMER"/>
<dbReference type="BRENDA" id="1.14.19.17">
    <property type="organism ID" value="2681"/>
</dbReference>
<dbReference type="PathwayCommons" id="O15121"/>
<dbReference type="Reactome" id="R-HSA-1660661">
    <property type="pathway name" value="Sphingolipid de novo biosynthesis"/>
</dbReference>
<dbReference type="Reactome" id="R-HSA-6798695">
    <property type="pathway name" value="Neutrophil degranulation"/>
</dbReference>
<dbReference type="SignaLink" id="O15121"/>
<dbReference type="BioGRID-ORCS" id="8560">
    <property type="hits" value="16 hits in 1162 CRISPR screens"/>
</dbReference>
<dbReference type="ChiTaRS" id="DEGS1">
    <property type="organism name" value="human"/>
</dbReference>
<dbReference type="GenomeRNAi" id="8560"/>
<dbReference type="Pharos" id="O15121">
    <property type="development level" value="Tchem"/>
</dbReference>
<dbReference type="PRO" id="PR:O15121"/>
<dbReference type="Proteomes" id="UP000005640">
    <property type="component" value="Chromosome 1"/>
</dbReference>
<dbReference type="RNAct" id="O15121">
    <property type="molecule type" value="protein"/>
</dbReference>
<dbReference type="Bgee" id="ENSG00000143753">
    <property type="expression patterns" value="Expressed in skin of hip and 204 other cell types or tissues"/>
</dbReference>
<dbReference type="ExpressionAtlas" id="O15121">
    <property type="expression patterns" value="baseline and differential"/>
</dbReference>
<dbReference type="GO" id="GO:0005783">
    <property type="term" value="C:endoplasmic reticulum"/>
    <property type="evidence" value="ECO:0000304"/>
    <property type="project" value="ProtInc"/>
</dbReference>
<dbReference type="GO" id="GO:0005789">
    <property type="term" value="C:endoplasmic reticulum membrane"/>
    <property type="evidence" value="ECO:0000304"/>
    <property type="project" value="Reactome"/>
</dbReference>
<dbReference type="GO" id="GO:0016020">
    <property type="term" value="C:membrane"/>
    <property type="evidence" value="ECO:0000304"/>
    <property type="project" value="ProtInc"/>
</dbReference>
<dbReference type="GO" id="GO:0031966">
    <property type="term" value="C:mitochondrial membrane"/>
    <property type="evidence" value="ECO:0007669"/>
    <property type="project" value="UniProtKB-SubCell"/>
</dbReference>
<dbReference type="GO" id="GO:0005739">
    <property type="term" value="C:mitochondrion"/>
    <property type="evidence" value="ECO:0000314"/>
    <property type="project" value="HPA"/>
</dbReference>
<dbReference type="GO" id="GO:0005886">
    <property type="term" value="C:plasma membrane"/>
    <property type="evidence" value="ECO:0000304"/>
    <property type="project" value="Reactome"/>
</dbReference>
<dbReference type="GO" id="GO:0035579">
    <property type="term" value="C:specific granule membrane"/>
    <property type="evidence" value="ECO:0000304"/>
    <property type="project" value="Reactome"/>
</dbReference>
<dbReference type="GO" id="GO:0009055">
    <property type="term" value="F:electron transfer activity"/>
    <property type="evidence" value="ECO:0000304"/>
    <property type="project" value="UniProtKB"/>
</dbReference>
<dbReference type="GO" id="GO:0050251">
    <property type="term" value="F:retinol isomerase activity"/>
    <property type="evidence" value="ECO:0000314"/>
    <property type="project" value="UniProtKB"/>
</dbReference>
<dbReference type="GO" id="GO:0042284">
    <property type="term" value="F:sphingolipid delta-4 desaturase activity"/>
    <property type="evidence" value="ECO:0000315"/>
    <property type="project" value="UniProtKB"/>
</dbReference>
<dbReference type="GO" id="GO:0046513">
    <property type="term" value="P:ceramide biosynthetic process"/>
    <property type="evidence" value="ECO:0000318"/>
    <property type="project" value="GO_Central"/>
</dbReference>
<dbReference type="GO" id="GO:0043217">
    <property type="term" value="P:myelin maintenance"/>
    <property type="evidence" value="ECO:0000315"/>
    <property type="project" value="UniProtKB"/>
</dbReference>
<dbReference type="GO" id="GO:0030148">
    <property type="term" value="P:sphingolipid biosynthetic process"/>
    <property type="evidence" value="ECO:0000304"/>
    <property type="project" value="Reactome"/>
</dbReference>
<dbReference type="GO" id="GO:0006636">
    <property type="term" value="P:unsaturated fatty acid biosynthetic process"/>
    <property type="evidence" value="ECO:0000304"/>
    <property type="project" value="ProtInc"/>
</dbReference>
<dbReference type="CDD" id="cd03508">
    <property type="entry name" value="Delta4-sphingolipid-FADS-like"/>
    <property type="match status" value="1"/>
</dbReference>
<dbReference type="InterPro" id="IPR011388">
    <property type="entry name" value="DES1/DES2"/>
</dbReference>
<dbReference type="InterPro" id="IPR005804">
    <property type="entry name" value="FA_desaturase_dom"/>
</dbReference>
<dbReference type="InterPro" id="IPR013866">
    <property type="entry name" value="Sphingolipid_d4-desaturase_N"/>
</dbReference>
<dbReference type="PANTHER" id="PTHR12879">
    <property type="entry name" value="SPHINGOLIPID DELTA 4 DESATURASE/C-4 HYDROXYLASE PROTEIN DES2"/>
    <property type="match status" value="1"/>
</dbReference>
<dbReference type="PANTHER" id="PTHR12879:SF2">
    <property type="entry name" value="SPHINGOLIPID DELTA(4)-DESATURASE DES1"/>
    <property type="match status" value="1"/>
</dbReference>
<dbReference type="Pfam" id="PF00487">
    <property type="entry name" value="FA_desaturase"/>
    <property type="match status" value="1"/>
</dbReference>
<dbReference type="Pfam" id="PF08557">
    <property type="entry name" value="Lipid_DES"/>
    <property type="match status" value="1"/>
</dbReference>
<dbReference type="PIRSF" id="PIRSF017228">
    <property type="entry name" value="Sphnglp_dlt4_des"/>
    <property type="match status" value="1"/>
</dbReference>
<dbReference type="SMART" id="SM01269">
    <property type="entry name" value="Lipid_DES"/>
    <property type="match status" value="1"/>
</dbReference>